<protein>
    <recommendedName>
        <fullName>Uncharacterized membrane protein YuzI</fullName>
    </recommendedName>
</protein>
<reference key="1">
    <citation type="journal article" date="1997" name="Nature">
        <title>The complete genome sequence of the Gram-positive bacterium Bacillus subtilis.</title>
        <authorList>
            <person name="Kunst F."/>
            <person name="Ogasawara N."/>
            <person name="Moszer I."/>
            <person name="Albertini A.M."/>
            <person name="Alloni G."/>
            <person name="Azevedo V."/>
            <person name="Bertero M.G."/>
            <person name="Bessieres P."/>
            <person name="Bolotin A."/>
            <person name="Borchert S."/>
            <person name="Borriss R."/>
            <person name="Boursier L."/>
            <person name="Brans A."/>
            <person name="Braun M."/>
            <person name="Brignell S.C."/>
            <person name="Bron S."/>
            <person name="Brouillet S."/>
            <person name="Bruschi C.V."/>
            <person name="Caldwell B."/>
            <person name="Capuano V."/>
            <person name="Carter N.M."/>
            <person name="Choi S.-K."/>
            <person name="Codani J.-J."/>
            <person name="Connerton I.F."/>
            <person name="Cummings N.J."/>
            <person name="Daniel R.A."/>
            <person name="Denizot F."/>
            <person name="Devine K.M."/>
            <person name="Duesterhoeft A."/>
            <person name="Ehrlich S.D."/>
            <person name="Emmerson P.T."/>
            <person name="Entian K.-D."/>
            <person name="Errington J."/>
            <person name="Fabret C."/>
            <person name="Ferrari E."/>
            <person name="Foulger D."/>
            <person name="Fritz C."/>
            <person name="Fujita M."/>
            <person name="Fujita Y."/>
            <person name="Fuma S."/>
            <person name="Galizzi A."/>
            <person name="Galleron N."/>
            <person name="Ghim S.-Y."/>
            <person name="Glaser P."/>
            <person name="Goffeau A."/>
            <person name="Golightly E.J."/>
            <person name="Grandi G."/>
            <person name="Guiseppi G."/>
            <person name="Guy B.J."/>
            <person name="Haga K."/>
            <person name="Haiech J."/>
            <person name="Harwood C.R."/>
            <person name="Henaut A."/>
            <person name="Hilbert H."/>
            <person name="Holsappel S."/>
            <person name="Hosono S."/>
            <person name="Hullo M.-F."/>
            <person name="Itaya M."/>
            <person name="Jones L.-M."/>
            <person name="Joris B."/>
            <person name="Karamata D."/>
            <person name="Kasahara Y."/>
            <person name="Klaerr-Blanchard M."/>
            <person name="Klein C."/>
            <person name="Kobayashi Y."/>
            <person name="Koetter P."/>
            <person name="Koningstein G."/>
            <person name="Krogh S."/>
            <person name="Kumano M."/>
            <person name="Kurita K."/>
            <person name="Lapidus A."/>
            <person name="Lardinois S."/>
            <person name="Lauber J."/>
            <person name="Lazarevic V."/>
            <person name="Lee S.-M."/>
            <person name="Levine A."/>
            <person name="Liu H."/>
            <person name="Masuda S."/>
            <person name="Mauel C."/>
            <person name="Medigue C."/>
            <person name="Medina N."/>
            <person name="Mellado R.P."/>
            <person name="Mizuno M."/>
            <person name="Moestl D."/>
            <person name="Nakai S."/>
            <person name="Noback M."/>
            <person name="Noone D."/>
            <person name="O'Reilly M."/>
            <person name="Ogawa K."/>
            <person name="Ogiwara A."/>
            <person name="Oudega B."/>
            <person name="Park S.-H."/>
            <person name="Parro V."/>
            <person name="Pohl T.M."/>
            <person name="Portetelle D."/>
            <person name="Porwollik S."/>
            <person name="Prescott A.M."/>
            <person name="Presecan E."/>
            <person name="Pujic P."/>
            <person name="Purnelle B."/>
            <person name="Rapoport G."/>
            <person name="Rey M."/>
            <person name="Reynolds S."/>
            <person name="Rieger M."/>
            <person name="Rivolta C."/>
            <person name="Rocha E."/>
            <person name="Roche B."/>
            <person name="Rose M."/>
            <person name="Sadaie Y."/>
            <person name="Sato T."/>
            <person name="Scanlan E."/>
            <person name="Schleich S."/>
            <person name="Schroeter R."/>
            <person name="Scoffone F."/>
            <person name="Sekiguchi J."/>
            <person name="Sekowska A."/>
            <person name="Seror S.J."/>
            <person name="Serror P."/>
            <person name="Shin B.-S."/>
            <person name="Soldo B."/>
            <person name="Sorokin A."/>
            <person name="Tacconi E."/>
            <person name="Takagi T."/>
            <person name="Takahashi H."/>
            <person name="Takemaru K."/>
            <person name="Takeuchi M."/>
            <person name="Tamakoshi A."/>
            <person name="Tanaka T."/>
            <person name="Terpstra P."/>
            <person name="Tognoni A."/>
            <person name="Tosato V."/>
            <person name="Uchiyama S."/>
            <person name="Vandenbol M."/>
            <person name="Vannier F."/>
            <person name="Vassarotti A."/>
            <person name="Viari A."/>
            <person name="Wambutt R."/>
            <person name="Wedler E."/>
            <person name="Wedler H."/>
            <person name="Weitzenegger T."/>
            <person name="Winters P."/>
            <person name="Wipat A."/>
            <person name="Yamamoto H."/>
            <person name="Yamane K."/>
            <person name="Yasumoto K."/>
            <person name="Yata K."/>
            <person name="Yoshida K."/>
            <person name="Yoshikawa H.-F."/>
            <person name="Zumstein E."/>
            <person name="Yoshikawa H."/>
            <person name="Danchin A."/>
        </authorList>
    </citation>
    <scope>NUCLEOTIDE SEQUENCE [LARGE SCALE GENOMIC DNA]</scope>
    <source>
        <strain>168</strain>
    </source>
</reference>
<evidence type="ECO:0000255" key="1"/>
<evidence type="ECO:0000305" key="2"/>
<feature type="chain" id="PRO_0000382216" description="Uncharacterized membrane protein YuzI">
    <location>
        <begin position="1"/>
        <end position="87"/>
    </location>
</feature>
<feature type="transmembrane region" description="Helical" evidence="1">
    <location>
        <begin position="8"/>
        <end position="28"/>
    </location>
</feature>
<feature type="transmembrane region" description="Helical" evidence="1">
    <location>
        <begin position="47"/>
        <end position="67"/>
    </location>
</feature>
<accession>C0H3Q4</accession>
<proteinExistence type="predicted"/>
<gene>
    <name type="primary">yuzI</name>
    <name type="ordered locus">BSU31319</name>
</gene>
<name>YUZI_BACSU</name>
<comment type="subcellular location">
    <subcellularLocation>
        <location evidence="2">Cell membrane</location>
        <topology evidence="2">Multi-pass membrane protein</topology>
    </subcellularLocation>
</comment>
<organism>
    <name type="scientific">Bacillus subtilis (strain 168)</name>
    <dbReference type="NCBI Taxonomy" id="224308"/>
    <lineage>
        <taxon>Bacteria</taxon>
        <taxon>Bacillati</taxon>
        <taxon>Bacillota</taxon>
        <taxon>Bacilli</taxon>
        <taxon>Bacillales</taxon>
        <taxon>Bacillaceae</taxon>
        <taxon>Bacillus</taxon>
    </lineage>
</organism>
<sequence>MTIFQRTIVVLIGTQLAASAVILFIFDLNSYNHFSGSFSWLHFLKELAGSFAFYLFSAGLFFLLIGLCAPSRKKKRISVHEKENSLK</sequence>
<keyword id="KW-1003">Cell membrane</keyword>
<keyword id="KW-0472">Membrane</keyword>
<keyword id="KW-1185">Reference proteome</keyword>
<keyword id="KW-0812">Transmembrane</keyword>
<keyword id="KW-1133">Transmembrane helix</keyword>
<dbReference type="EMBL" id="AL009126">
    <property type="protein sequence ID" value="CAX52683.1"/>
    <property type="molecule type" value="Genomic_DNA"/>
</dbReference>
<dbReference type="RefSeq" id="WP_003243434.1">
    <property type="nucleotide sequence ID" value="NZ_OZ025638.1"/>
</dbReference>
<dbReference type="RefSeq" id="YP_003097777.1">
    <property type="nucleotide sequence ID" value="NC_000964.3"/>
</dbReference>
<dbReference type="FunCoup" id="C0H3Q4">
    <property type="interactions" value="2"/>
</dbReference>
<dbReference type="STRING" id="224308.BSU31319"/>
<dbReference type="PaxDb" id="224308-BSU31319"/>
<dbReference type="EnsemblBacteria" id="CAX52683">
    <property type="protein sequence ID" value="CAX52683"/>
    <property type="gene ID" value="BSU_31319"/>
</dbReference>
<dbReference type="GeneID" id="8303062"/>
<dbReference type="KEGG" id="bsu:BSU31319"/>
<dbReference type="PATRIC" id="fig|224308.179.peg.3394"/>
<dbReference type="eggNOG" id="ENOG5030D00">
    <property type="taxonomic scope" value="Bacteria"/>
</dbReference>
<dbReference type="InParanoid" id="C0H3Q4"/>
<dbReference type="OrthoDB" id="2883716at2"/>
<dbReference type="BioCyc" id="BSUB:BSU31319-MONOMER"/>
<dbReference type="Proteomes" id="UP000001570">
    <property type="component" value="Chromosome"/>
</dbReference>
<dbReference type="GO" id="GO:0005886">
    <property type="term" value="C:plasma membrane"/>
    <property type="evidence" value="ECO:0007669"/>
    <property type="project" value="UniProtKB-SubCell"/>
</dbReference>